<organism>
    <name type="scientific">Mus musculus</name>
    <name type="common">Mouse</name>
    <dbReference type="NCBI Taxonomy" id="10090"/>
    <lineage>
        <taxon>Eukaryota</taxon>
        <taxon>Metazoa</taxon>
        <taxon>Chordata</taxon>
        <taxon>Craniata</taxon>
        <taxon>Vertebrata</taxon>
        <taxon>Euteleostomi</taxon>
        <taxon>Mammalia</taxon>
        <taxon>Eutheria</taxon>
        <taxon>Euarchontoglires</taxon>
        <taxon>Glires</taxon>
        <taxon>Rodentia</taxon>
        <taxon>Myomorpha</taxon>
        <taxon>Muroidea</taxon>
        <taxon>Muridae</taxon>
        <taxon>Murinae</taxon>
        <taxon>Mus</taxon>
        <taxon>Mus</taxon>
    </lineage>
</organism>
<evidence type="ECO:0000250" key="1">
    <source>
        <dbReference type="UniProtKB" id="Q96P70"/>
    </source>
</evidence>
<evidence type="ECO:0000255" key="2">
    <source>
        <dbReference type="PROSITE-ProRule" id="PRU00115"/>
    </source>
</evidence>
<evidence type="ECO:0000256" key="3">
    <source>
        <dbReference type="SAM" id="MobiDB-lite"/>
    </source>
</evidence>
<evidence type="ECO:0000269" key="4">
    <source>
    </source>
</evidence>
<evidence type="ECO:0000269" key="5">
    <source>
    </source>
</evidence>
<evidence type="ECO:0000269" key="6">
    <source>
    </source>
</evidence>
<evidence type="ECO:0000303" key="7">
    <source>
    </source>
</evidence>
<evidence type="ECO:0000303" key="8">
    <source>
    </source>
</evidence>
<evidence type="ECO:0000305" key="9"/>
<evidence type="ECO:0000312" key="10">
    <source>
        <dbReference type="MGI" id="MGI:1918944"/>
    </source>
</evidence>
<comment type="function">
    <text evidence="1 4 5 6">Nuclear transport receptor that mediates nuclear import of proteins, such as histones, proteasome and actin (PubMed:11493596, PubMed:11823430, PubMed:22323606). Serves as receptor for nuclear localization signals (NLS) in cargo substrates (PubMed:11493596, PubMed:11823430). Is thought to mediate docking of the importin/substrate complex to the nuclear pore complex (NPC) through binding to nucleoporin and the complex is subsequently translocated through the pore by an energy requiring, Ran-dependent mechanism (PubMed:11493596, PubMed:11823430). At the nucleoplasmic side of the NPC, Ran binds to the importin, the importin/substrate complex dissociates and importin is re-exported from the nucleus to the cytoplasm where GTP hydrolysis releases Ran (PubMed:11493596, PubMed:11823430). The directionality of nuclear import is thought to be conferred by an asymmetric distribution of the GTP- and GDP-bound forms of Ran between the cytoplasm and nucleus (PubMed:11493596, PubMed:11823430). Mediates the import of pre-assembled proteasomes into the nucleus; AKIRIN2 acts as a molecular bridge between IPO9 and the proteasome complex (By similarity). Mediates the nuclear import of histones H2A, H2B, H4 and H4 (PubMed:11493596, PubMed:11823430). In addition to nuclear import, also acts as a chaperone for histones by preventing inappropriate non-nucleosomal interactions (By similarity). Mediates the nuclear import of actin (PubMed:22323606).</text>
</comment>
<comment type="subunit">
    <text evidence="1 4 5">Interacts with histones H2A, H2B, H3 and H4 (PubMed:11493596, PubMed:11823430). The binding is coupled to RanGTP cycles (PubMed:11493596, PubMed:11823430). Interacts with AKIRIN2; promoting association with pre-assembled proteasomes (By similarity). Associates with pre-assembled proteasomes; interaction is indirect and mediated via interaction with AKIRIN2 (By similarity). Interacts with PPP2R1A and PPP2R1B (By similarity).</text>
</comment>
<comment type="subcellular location">
    <subcellularLocation>
        <location evidence="1">Cytoplasm</location>
    </subcellularLocation>
    <subcellularLocation>
        <location evidence="1">Nucleus</location>
    </subcellularLocation>
</comment>
<comment type="similarity">
    <text evidence="9">Belongs to the importin beta family.</text>
</comment>
<accession>Q91YE6</accession>
<accession>Q924M3</accession>
<accession>Q924M4</accession>
<name>IPO9_MOUSE</name>
<sequence length="1041" mass="116052">MAAAAAAGAASGLPGPVAQGLKEALVDTLTGILSPVQEVRAAAEEQIKVLEVTEEFGVHLAELTVDPQGALAIRQLASVILKQYVETHWCAQSEKFRPPETTERAKIVIRELLPNGLRESISKVRSSVAYAVSAIAHWDWPEAWPQLFNLLMEMLVSGDLNAVHGAMRVLTEFTREVTDTQMPLVAPVILPEMYKIFTMAEVYGIRTRSRAVEIFTTCAHMICNMEELEKGAAKVLIFPVVQQFTEAFVQALQMPDGPTSDSGFKMEVLKAVTALVKNFPKHMVSSMQQILPIVWNTLTESAAFYVRTEVNYTEEVEDPVDSDGEVLGFENLVFSIFEFVHALLENSKFKSTVKKALPELIYYIILYMQITEEQIKVWTANPQQFVEDEDDDTFSYTVRIAAQDLLLAVATDFQNESAVALATAATRHLQEAEQTKASGTEHWWKIHEACMLALGSVKSIITDSVKNGRIHFDMHGFLTNVILADLNLSASPFLLGRALWAASRFTVAMSPELIQQFLQATVSGLHETQPPSVRISAVRAIWGYCDQLKVSESTHVLQPFLPSILDGLIHLAAQFSSEVLNLVMETLCIVCTVDPEFTASVENKICPFTIAIFLKYSNDPVVASLAQDIFKELSQIEACQGPMQMRLIPTLVSIMQAPADKIPAGLCATAIDILTTVVRNTKPPLSQLLICQAFPAVAQCTLHTDDNATMQNGGECLRAYVSVTLEQVAQWHDEQGHNGLWYVMQVVSQLLDPRTSEFTAAFVGRLVSTLISKAGRELGENLDQILRAILSKMQQAETLSVMQSLIMVFAHLVHTQLEPLLEFLCSLPGPTGKPALEFVMAEWTSRQHLFYGQYEGKVSSVALCKLLQHGINADDKRLQDIRVKGEEIYSMDEGIRTRSKSAKNPERWTNIPLLVKILKLIINELSNVMEANAARQATPAEWNQDDSNDMWEDQEEEEEEEEDGLAGQLLSDILATSKYEEDYYEDDEEDDPDALKDPLYQIDLQAYLTDFLCQFAQQPCYIMFSCHLNDNERRVLQTIGI</sequence>
<feature type="initiator methionine" description="Removed" evidence="1">
    <location>
        <position position="1"/>
    </location>
</feature>
<feature type="chain" id="PRO_0000120755" description="Importin-9">
    <location>
        <begin position="2"/>
        <end position="1041"/>
    </location>
</feature>
<feature type="domain" description="Importin N-terminal" evidence="2">
    <location>
        <begin position="43"/>
        <end position="119"/>
    </location>
</feature>
<feature type="region of interest" description="Disordered" evidence="3">
    <location>
        <begin position="936"/>
        <end position="967"/>
    </location>
</feature>
<feature type="compositionally biased region" description="Acidic residues" evidence="3">
    <location>
        <begin position="943"/>
        <end position="964"/>
    </location>
</feature>
<feature type="modified residue" description="N-acetylalanine" evidence="1">
    <location>
        <position position="2"/>
    </location>
</feature>
<feature type="sequence conflict" description="In Ref. 2; AAK91127." evidence="9" ref="2">
    <original>A</original>
    <variation>V</variation>
    <location>
        <position position="166"/>
    </location>
</feature>
<feature type="sequence conflict" description="In Ref. 2; AAK91127." evidence="9" ref="2">
    <original>K</original>
    <variation>E</variation>
    <location>
        <position position="277"/>
    </location>
</feature>
<feature type="sequence conflict" description="In Ref. 2; AAK91127." evidence="9" ref="2">
    <original>L</original>
    <variation>P</variation>
    <location>
        <position position="782"/>
    </location>
</feature>
<feature type="sequence conflict" description="In Ref. 2; AAK91128." evidence="9" ref="2">
    <original>M</original>
    <variation>V</variation>
    <location>
        <position position="793"/>
    </location>
</feature>
<feature type="sequence conflict" description="In Ref. 2; AAK91127." evidence="9" ref="2">
    <original>V</original>
    <variation>A</variation>
    <location>
        <position position="801"/>
    </location>
</feature>
<protein>
    <recommendedName>
        <fullName evidence="7">Importin-9</fullName>
        <shortName evidence="7">Imp9</shortName>
    </recommendedName>
    <alternativeName>
        <fullName evidence="8">Importin-9a</fullName>
        <shortName evidence="8">Imp9a</shortName>
    </alternativeName>
    <alternativeName>
        <fullName evidence="8">Importin-9b</fullName>
        <shortName evidence="8">Imp9b</shortName>
    </alternativeName>
    <alternativeName>
        <fullName>Ran-binding protein 9</fullName>
        <shortName>RanBP9</shortName>
    </alternativeName>
</protein>
<gene>
    <name evidence="10" type="primary">Ipo9</name>
    <name evidence="7" type="synonym">Imp9</name>
    <name type="synonym">Ranbp9</name>
</gene>
<reference key="1">
    <citation type="journal article" date="2001" name="EMBO Rep.">
        <title>Multiple pathways contribute to nuclear import of core histones.</title>
        <authorList>
            <person name="Muehlhaeusser P."/>
            <person name="Mueller E.-C."/>
            <person name="Otto A."/>
            <person name="Kutay U."/>
        </authorList>
    </citation>
    <scope>NUCLEOTIDE SEQUENCE [MRNA]</scope>
    <scope>FUNCTION</scope>
    <scope>INTERACTION WITH HISTONES H2B; H2A; H3 AND H4</scope>
</reference>
<reference key="2">
    <citation type="journal article" date="2002" name="EMBO J.">
        <title>Importins fulfill a dual function as nuclear import receptors and cytoplasmic chaperones for exposed basic domains.</title>
        <authorList>
            <person name="Jaekel S."/>
            <person name="Mingot J.-M."/>
            <person name="Schwarzmaier P."/>
            <person name="Hartmann E."/>
            <person name="Goerlich D."/>
        </authorList>
    </citation>
    <scope>NUCLEOTIDE SEQUENCE [MRNA]</scope>
    <scope>FUNCTION</scope>
    <scope>INTERACTION WITH RPS7; RPL18A; RPL4 AND RPL6</scope>
</reference>
<reference key="3">
    <citation type="journal article" date="2010" name="Cell">
        <title>A tissue-specific atlas of mouse protein phosphorylation and expression.</title>
        <authorList>
            <person name="Huttlin E.L."/>
            <person name="Jedrychowski M.P."/>
            <person name="Elias J.E."/>
            <person name="Goswami T."/>
            <person name="Rad R."/>
            <person name="Beausoleil S.A."/>
            <person name="Villen J."/>
            <person name="Haas W."/>
            <person name="Sowa M.E."/>
            <person name="Gygi S.P."/>
        </authorList>
    </citation>
    <scope>IDENTIFICATION BY MASS SPECTROMETRY [LARGE SCALE ANALYSIS]</scope>
    <source>
        <tissue>Brain</tissue>
        <tissue>Brown adipose tissue</tissue>
        <tissue>Heart</tissue>
        <tissue>Kidney</tissue>
        <tissue>Liver</tissue>
        <tissue>Lung</tissue>
        <tissue>Pancreas</tissue>
        <tissue>Spleen</tissue>
        <tissue>Testis</tissue>
    </source>
</reference>
<reference key="4">
    <citation type="journal article" date="2012" name="Proc. Natl. Acad. Sci. U.S.A.">
        <title>Active maintenance of nuclear actin by importin 9 supports transcription.</title>
        <authorList>
            <person name="Dopie J."/>
            <person name="Skarp K.P."/>
            <person name="Rajakyla E.K."/>
            <person name="Tanhuanpaa K."/>
            <person name="Vartiainen M.K."/>
        </authorList>
    </citation>
    <scope>FUNCTION</scope>
</reference>
<dbReference type="EMBL" id="AJ309238">
    <property type="protein sequence ID" value="CAC69407.1"/>
    <property type="molecule type" value="mRNA"/>
</dbReference>
<dbReference type="EMBL" id="AF273672">
    <property type="protein sequence ID" value="AAK91127.1"/>
    <property type="molecule type" value="mRNA"/>
</dbReference>
<dbReference type="EMBL" id="AF273673">
    <property type="protein sequence ID" value="AAK91128.1"/>
    <property type="molecule type" value="mRNA"/>
</dbReference>
<dbReference type="SMR" id="Q91YE6"/>
<dbReference type="DIP" id="DIP-34268N"/>
<dbReference type="FunCoup" id="Q91YE6">
    <property type="interactions" value="3851"/>
</dbReference>
<dbReference type="IntAct" id="Q91YE6">
    <property type="interactions" value="7"/>
</dbReference>
<dbReference type="MINT" id="Q91YE6"/>
<dbReference type="STRING" id="10090.ENSMUSP00000036093"/>
<dbReference type="GlyGen" id="Q91YE6">
    <property type="glycosylation" value="3 sites, 1 O-linked glycan (1 site)"/>
</dbReference>
<dbReference type="iPTMnet" id="Q91YE6"/>
<dbReference type="PhosphoSitePlus" id="Q91YE6"/>
<dbReference type="SwissPalm" id="Q91YE6"/>
<dbReference type="jPOST" id="Q91YE6"/>
<dbReference type="PaxDb" id="10090-ENSMUSP00000036093"/>
<dbReference type="ProteomicsDB" id="269498"/>
<dbReference type="Pumba" id="Q91YE6"/>
<dbReference type="AGR" id="MGI:1918944"/>
<dbReference type="MGI" id="MGI:1918944">
    <property type="gene designation" value="Ipo9"/>
</dbReference>
<dbReference type="eggNOG" id="KOG2274">
    <property type="taxonomic scope" value="Eukaryota"/>
</dbReference>
<dbReference type="InParanoid" id="Q91YE6"/>
<dbReference type="OrthoDB" id="431626at2759"/>
<dbReference type="PhylomeDB" id="Q91YE6"/>
<dbReference type="ChiTaRS" id="Ipo9">
    <property type="organism name" value="mouse"/>
</dbReference>
<dbReference type="PRO" id="PR:Q91YE6"/>
<dbReference type="Proteomes" id="UP000000589">
    <property type="component" value="Unplaced"/>
</dbReference>
<dbReference type="RNAct" id="Q91YE6">
    <property type="molecule type" value="protein"/>
</dbReference>
<dbReference type="GO" id="GO:0005737">
    <property type="term" value="C:cytoplasm"/>
    <property type="evidence" value="ECO:0000250"/>
    <property type="project" value="UniProtKB"/>
</dbReference>
<dbReference type="GO" id="GO:0005634">
    <property type="term" value="C:nucleus"/>
    <property type="evidence" value="ECO:0007669"/>
    <property type="project" value="UniProtKB-SubCell"/>
</dbReference>
<dbReference type="GO" id="GO:0042393">
    <property type="term" value="F:histone binding"/>
    <property type="evidence" value="ECO:0000314"/>
    <property type="project" value="MGI"/>
</dbReference>
<dbReference type="GO" id="GO:0140713">
    <property type="term" value="F:histone chaperone activity"/>
    <property type="evidence" value="ECO:0000250"/>
    <property type="project" value="UniProtKB"/>
</dbReference>
<dbReference type="GO" id="GO:0061608">
    <property type="term" value="F:nuclear import signal receptor activity"/>
    <property type="evidence" value="ECO:0000250"/>
    <property type="project" value="UniProtKB"/>
</dbReference>
<dbReference type="GO" id="GO:0031267">
    <property type="term" value="F:small GTPase binding"/>
    <property type="evidence" value="ECO:0000304"/>
    <property type="project" value="MGI"/>
</dbReference>
<dbReference type="GO" id="GO:0031144">
    <property type="term" value="P:proteasome localization"/>
    <property type="evidence" value="ECO:0000250"/>
    <property type="project" value="UniProtKB"/>
</dbReference>
<dbReference type="GO" id="GO:0006606">
    <property type="term" value="P:protein import into nucleus"/>
    <property type="evidence" value="ECO:0000314"/>
    <property type="project" value="MGI"/>
</dbReference>
<dbReference type="GO" id="GO:0050821">
    <property type="term" value="P:protein stabilization"/>
    <property type="evidence" value="ECO:0000247"/>
    <property type="project" value="MGI"/>
</dbReference>
<dbReference type="GO" id="GO:0042254">
    <property type="term" value="P:ribosome biogenesis"/>
    <property type="evidence" value="ECO:0000247"/>
    <property type="project" value="MGI"/>
</dbReference>
<dbReference type="Gene3D" id="1.25.10.10">
    <property type="entry name" value="Leucine-rich Repeat Variant"/>
    <property type="match status" value="1"/>
</dbReference>
<dbReference type="InterPro" id="IPR011989">
    <property type="entry name" value="ARM-like"/>
</dbReference>
<dbReference type="InterPro" id="IPR016024">
    <property type="entry name" value="ARM-type_fold"/>
</dbReference>
<dbReference type="InterPro" id="IPR056840">
    <property type="entry name" value="HEAT_IPO9_central"/>
</dbReference>
<dbReference type="InterPro" id="IPR001494">
    <property type="entry name" value="Importin-beta_N"/>
</dbReference>
<dbReference type="PANTHER" id="PTHR10997">
    <property type="entry name" value="IMPORTIN-7, 8, 11"/>
    <property type="match status" value="1"/>
</dbReference>
<dbReference type="PANTHER" id="PTHR10997:SF9">
    <property type="entry name" value="IMPORTIN-9"/>
    <property type="match status" value="1"/>
</dbReference>
<dbReference type="Pfam" id="PF25018">
    <property type="entry name" value="HEAT_IPO9_c"/>
    <property type="match status" value="1"/>
</dbReference>
<dbReference type="Pfam" id="PF03810">
    <property type="entry name" value="IBN_N"/>
    <property type="match status" value="1"/>
</dbReference>
<dbReference type="SMART" id="SM00913">
    <property type="entry name" value="IBN_N"/>
    <property type="match status" value="1"/>
</dbReference>
<dbReference type="SUPFAM" id="SSF48371">
    <property type="entry name" value="ARM repeat"/>
    <property type="match status" value="1"/>
</dbReference>
<dbReference type="PROSITE" id="PS50166">
    <property type="entry name" value="IMPORTIN_B_NT"/>
    <property type="match status" value="1"/>
</dbReference>
<keyword id="KW-0007">Acetylation</keyword>
<keyword id="KW-0143">Chaperone</keyword>
<keyword id="KW-0963">Cytoplasm</keyword>
<keyword id="KW-0539">Nucleus</keyword>
<keyword id="KW-0653">Protein transport</keyword>
<keyword id="KW-1185">Reference proteome</keyword>
<keyword id="KW-0813">Transport</keyword>
<proteinExistence type="evidence at protein level"/>